<proteinExistence type="inferred from homology"/>
<name>ARLY_ECO57</name>
<dbReference type="EC" id="4.3.2.1" evidence="1"/>
<dbReference type="EMBL" id="AE005174">
    <property type="protein sequence ID" value="AAG59162.1"/>
    <property type="molecule type" value="Genomic_DNA"/>
</dbReference>
<dbReference type="EMBL" id="BA000007">
    <property type="protein sequence ID" value="BAB38312.1"/>
    <property type="molecule type" value="Genomic_DNA"/>
</dbReference>
<dbReference type="PIR" id="A98240">
    <property type="entry name" value="A98240"/>
</dbReference>
<dbReference type="PIR" id="F86087">
    <property type="entry name" value="F86087"/>
</dbReference>
<dbReference type="RefSeq" id="NP_312916.1">
    <property type="nucleotide sequence ID" value="NC_002695.1"/>
</dbReference>
<dbReference type="RefSeq" id="WP_001230096.1">
    <property type="nucleotide sequence ID" value="NZ_SDVX01000004.1"/>
</dbReference>
<dbReference type="SMR" id="Q8X730"/>
<dbReference type="STRING" id="155864.Z5518"/>
<dbReference type="GeneID" id="914993"/>
<dbReference type="KEGG" id="ece:Z5518"/>
<dbReference type="KEGG" id="ecs:ECs_4889"/>
<dbReference type="PATRIC" id="fig|386585.9.peg.5113"/>
<dbReference type="eggNOG" id="COG0165">
    <property type="taxonomic scope" value="Bacteria"/>
</dbReference>
<dbReference type="HOGENOM" id="CLU_027272_2_3_6"/>
<dbReference type="UniPathway" id="UPA00068">
    <property type="reaction ID" value="UER00114"/>
</dbReference>
<dbReference type="Proteomes" id="UP000000558">
    <property type="component" value="Chromosome"/>
</dbReference>
<dbReference type="Proteomes" id="UP000002519">
    <property type="component" value="Chromosome"/>
</dbReference>
<dbReference type="GO" id="GO:0005829">
    <property type="term" value="C:cytosol"/>
    <property type="evidence" value="ECO:0007669"/>
    <property type="project" value="TreeGrafter"/>
</dbReference>
<dbReference type="GO" id="GO:0004056">
    <property type="term" value="F:argininosuccinate lyase activity"/>
    <property type="evidence" value="ECO:0007669"/>
    <property type="project" value="UniProtKB-UniRule"/>
</dbReference>
<dbReference type="GO" id="GO:0042450">
    <property type="term" value="P:arginine biosynthetic process via ornithine"/>
    <property type="evidence" value="ECO:0007669"/>
    <property type="project" value="InterPro"/>
</dbReference>
<dbReference type="GO" id="GO:0006526">
    <property type="term" value="P:L-arginine biosynthetic process"/>
    <property type="evidence" value="ECO:0007669"/>
    <property type="project" value="UniProtKB-UniRule"/>
</dbReference>
<dbReference type="CDD" id="cd01359">
    <property type="entry name" value="Argininosuccinate_lyase"/>
    <property type="match status" value="1"/>
</dbReference>
<dbReference type="FunFam" id="1.10.275.10:FF:000004">
    <property type="entry name" value="Argininosuccinate lyase"/>
    <property type="match status" value="1"/>
</dbReference>
<dbReference type="FunFam" id="1.10.40.30:FF:000001">
    <property type="entry name" value="Argininosuccinate lyase"/>
    <property type="match status" value="1"/>
</dbReference>
<dbReference type="FunFam" id="1.20.200.10:FF:000006">
    <property type="entry name" value="Argininosuccinate lyase"/>
    <property type="match status" value="1"/>
</dbReference>
<dbReference type="Gene3D" id="1.10.40.30">
    <property type="entry name" value="Fumarase/aspartase (C-terminal domain)"/>
    <property type="match status" value="1"/>
</dbReference>
<dbReference type="Gene3D" id="1.20.200.10">
    <property type="entry name" value="Fumarase/aspartase (Central domain)"/>
    <property type="match status" value="1"/>
</dbReference>
<dbReference type="Gene3D" id="1.10.275.10">
    <property type="entry name" value="Fumarase/aspartase (N-terminal domain)"/>
    <property type="match status" value="1"/>
</dbReference>
<dbReference type="HAMAP" id="MF_00006">
    <property type="entry name" value="Arg_succ_lyase"/>
    <property type="match status" value="1"/>
</dbReference>
<dbReference type="InterPro" id="IPR029419">
    <property type="entry name" value="Arg_succ_lyase_C"/>
</dbReference>
<dbReference type="InterPro" id="IPR009049">
    <property type="entry name" value="Argininosuccinate_lyase"/>
</dbReference>
<dbReference type="InterPro" id="IPR024083">
    <property type="entry name" value="Fumarase/histidase_N"/>
</dbReference>
<dbReference type="InterPro" id="IPR020557">
    <property type="entry name" value="Fumarate_lyase_CS"/>
</dbReference>
<dbReference type="InterPro" id="IPR000362">
    <property type="entry name" value="Fumarate_lyase_fam"/>
</dbReference>
<dbReference type="InterPro" id="IPR022761">
    <property type="entry name" value="Fumarate_lyase_N"/>
</dbReference>
<dbReference type="InterPro" id="IPR008948">
    <property type="entry name" value="L-Aspartase-like"/>
</dbReference>
<dbReference type="NCBIfam" id="TIGR00838">
    <property type="entry name" value="argH"/>
    <property type="match status" value="1"/>
</dbReference>
<dbReference type="NCBIfam" id="NF008964">
    <property type="entry name" value="PRK12308.1"/>
    <property type="match status" value="1"/>
</dbReference>
<dbReference type="PANTHER" id="PTHR43814">
    <property type="entry name" value="ARGININOSUCCINATE LYASE"/>
    <property type="match status" value="1"/>
</dbReference>
<dbReference type="PANTHER" id="PTHR43814:SF1">
    <property type="entry name" value="ARGININOSUCCINATE LYASE"/>
    <property type="match status" value="1"/>
</dbReference>
<dbReference type="Pfam" id="PF14698">
    <property type="entry name" value="ASL_C2"/>
    <property type="match status" value="1"/>
</dbReference>
<dbReference type="Pfam" id="PF00206">
    <property type="entry name" value="Lyase_1"/>
    <property type="match status" value="1"/>
</dbReference>
<dbReference type="PRINTS" id="PR00145">
    <property type="entry name" value="ARGSUCLYASE"/>
</dbReference>
<dbReference type="PRINTS" id="PR00149">
    <property type="entry name" value="FUMRATELYASE"/>
</dbReference>
<dbReference type="SUPFAM" id="SSF48557">
    <property type="entry name" value="L-aspartase-like"/>
    <property type="match status" value="1"/>
</dbReference>
<dbReference type="PROSITE" id="PS00163">
    <property type="entry name" value="FUMARATE_LYASES"/>
    <property type="match status" value="1"/>
</dbReference>
<organism>
    <name type="scientific">Escherichia coli O157:H7</name>
    <dbReference type="NCBI Taxonomy" id="83334"/>
    <lineage>
        <taxon>Bacteria</taxon>
        <taxon>Pseudomonadati</taxon>
        <taxon>Pseudomonadota</taxon>
        <taxon>Gammaproteobacteria</taxon>
        <taxon>Enterobacterales</taxon>
        <taxon>Enterobacteriaceae</taxon>
        <taxon>Escherichia</taxon>
    </lineage>
</organism>
<evidence type="ECO:0000255" key="1">
    <source>
        <dbReference type="HAMAP-Rule" id="MF_00006"/>
    </source>
</evidence>
<accession>Q8X730</accession>
<keyword id="KW-0028">Amino-acid biosynthesis</keyword>
<keyword id="KW-0055">Arginine biosynthesis</keyword>
<keyword id="KW-0963">Cytoplasm</keyword>
<keyword id="KW-0456">Lyase</keyword>
<keyword id="KW-1185">Reference proteome</keyword>
<sequence>MALWGGRFTQAADQRFKQFNDSLRFDYRLAEQDIVGSVAWSKALVTVGVLTAEEQAQLEEALNVLLEDVRARPQQILESDAEDIHSWVEGKLIDKVGQLGKKLHTGRSRNDQVATDLKLWCKDTVSELLTANRQLQSALVETAQNNQDAVMPGYTHLQRAQPVTFAHWCLAYVEMLARDESRLQDALKRLDVSPLGCGALAGTAYEIDREQLAGWLGFASATRNSLDSVSDRDHVLELLSAAAIGMVHLSRFAEDLIFFNTGEAGFVELSDRVTSGSSLMPQKKNPDALELIRGKCGRVQGALTGMMMTLKGLPLAYNKDMQEDKEGLFDALDTWLDCLHMAALVLDGIQVKRPRCQEAAQQGYANATELADYLVAKGVPFREAHHIVGEAVVEAIRQGKPLEELPLTELQKFSPVIGEDVYPILSLQSCLDKRAAKGGVSPQQVARAIAFARARLG</sequence>
<gene>
    <name evidence="1" type="primary">argH</name>
    <name type="ordered locus">Z5518</name>
    <name type="ordered locus">ECs4889</name>
</gene>
<comment type="catalytic activity">
    <reaction evidence="1">
        <text>2-(N(omega)-L-arginino)succinate = fumarate + L-arginine</text>
        <dbReference type="Rhea" id="RHEA:24020"/>
        <dbReference type="ChEBI" id="CHEBI:29806"/>
        <dbReference type="ChEBI" id="CHEBI:32682"/>
        <dbReference type="ChEBI" id="CHEBI:57472"/>
        <dbReference type="EC" id="4.3.2.1"/>
    </reaction>
</comment>
<comment type="pathway">
    <text evidence="1">Amino-acid biosynthesis; L-arginine biosynthesis; L-arginine from L-ornithine and carbamoyl phosphate: step 3/3.</text>
</comment>
<comment type="subcellular location">
    <subcellularLocation>
        <location evidence="1">Cytoplasm</location>
    </subcellularLocation>
</comment>
<comment type="similarity">
    <text evidence="1">Belongs to the lyase 1 family. Argininosuccinate lyase subfamily.</text>
</comment>
<feature type="chain" id="PRO_0000137770" description="Argininosuccinate lyase">
    <location>
        <begin position="1"/>
        <end position="457"/>
    </location>
</feature>
<reference key="1">
    <citation type="journal article" date="2001" name="Nature">
        <title>Genome sequence of enterohaemorrhagic Escherichia coli O157:H7.</title>
        <authorList>
            <person name="Perna N.T."/>
            <person name="Plunkett G. III"/>
            <person name="Burland V."/>
            <person name="Mau B."/>
            <person name="Glasner J.D."/>
            <person name="Rose D.J."/>
            <person name="Mayhew G.F."/>
            <person name="Evans P.S."/>
            <person name="Gregor J."/>
            <person name="Kirkpatrick H.A."/>
            <person name="Posfai G."/>
            <person name="Hackett J."/>
            <person name="Klink S."/>
            <person name="Boutin A."/>
            <person name="Shao Y."/>
            <person name="Miller L."/>
            <person name="Grotbeck E.J."/>
            <person name="Davis N.W."/>
            <person name="Lim A."/>
            <person name="Dimalanta E.T."/>
            <person name="Potamousis K."/>
            <person name="Apodaca J."/>
            <person name="Anantharaman T.S."/>
            <person name="Lin J."/>
            <person name="Yen G."/>
            <person name="Schwartz D.C."/>
            <person name="Welch R.A."/>
            <person name="Blattner F.R."/>
        </authorList>
    </citation>
    <scope>NUCLEOTIDE SEQUENCE [LARGE SCALE GENOMIC DNA]</scope>
    <source>
        <strain>O157:H7 / EDL933 / ATCC 700927 / EHEC</strain>
    </source>
</reference>
<reference key="2">
    <citation type="journal article" date="2001" name="DNA Res.">
        <title>Complete genome sequence of enterohemorrhagic Escherichia coli O157:H7 and genomic comparison with a laboratory strain K-12.</title>
        <authorList>
            <person name="Hayashi T."/>
            <person name="Makino K."/>
            <person name="Ohnishi M."/>
            <person name="Kurokawa K."/>
            <person name="Ishii K."/>
            <person name="Yokoyama K."/>
            <person name="Han C.-G."/>
            <person name="Ohtsubo E."/>
            <person name="Nakayama K."/>
            <person name="Murata T."/>
            <person name="Tanaka M."/>
            <person name="Tobe T."/>
            <person name="Iida T."/>
            <person name="Takami H."/>
            <person name="Honda T."/>
            <person name="Sasakawa C."/>
            <person name="Ogasawara N."/>
            <person name="Yasunaga T."/>
            <person name="Kuhara S."/>
            <person name="Shiba T."/>
            <person name="Hattori M."/>
            <person name="Shinagawa H."/>
        </authorList>
    </citation>
    <scope>NUCLEOTIDE SEQUENCE [LARGE SCALE GENOMIC DNA]</scope>
    <source>
        <strain>O157:H7 / Sakai / RIMD 0509952 / EHEC</strain>
    </source>
</reference>
<protein>
    <recommendedName>
        <fullName evidence="1">Argininosuccinate lyase</fullName>
        <shortName evidence="1">ASAL</shortName>
        <ecNumber evidence="1">4.3.2.1</ecNumber>
    </recommendedName>
    <alternativeName>
        <fullName evidence="1">Arginosuccinase</fullName>
    </alternativeName>
</protein>